<dbReference type="EC" id="6.1.1.3" evidence="1"/>
<dbReference type="EMBL" id="CP000901">
    <property type="protein sequence ID" value="ABX87054.1"/>
    <property type="molecule type" value="Genomic_DNA"/>
</dbReference>
<dbReference type="RefSeq" id="WP_002211836.1">
    <property type="nucleotide sequence ID" value="NZ_CP009935.1"/>
</dbReference>
<dbReference type="SMR" id="A9R0A8"/>
<dbReference type="GeneID" id="57976245"/>
<dbReference type="KEGG" id="ypg:YpAngola_A2625"/>
<dbReference type="PATRIC" id="fig|349746.12.peg.3652"/>
<dbReference type="GO" id="GO:0005829">
    <property type="term" value="C:cytosol"/>
    <property type="evidence" value="ECO:0007669"/>
    <property type="project" value="TreeGrafter"/>
</dbReference>
<dbReference type="GO" id="GO:0005524">
    <property type="term" value="F:ATP binding"/>
    <property type="evidence" value="ECO:0007669"/>
    <property type="project" value="UniProtKB-UniRule"/>
</dbReference>
<dbReference type="GO" id="GO:0046872">
    <property type="term" value="F:metal ion binding"/>
    <property type="evidence" value="ECO:0007669"/>
    <property type="project" value="UniProtKB-KW"/>
</dbReference>
<dbReference type="GO" id="GO:0004829">
    <property type="term" value="F:threonine-tRNA ligase activity"/>
    <property type="evidence" value="ECO:0007669"/>
    <property type="project" value="UniProtKB-UniRule"/>
</dbReference>
<dbReference type="GO" id="GO:0000049">
    <property type="term" value="F:tRNA binding"/>
    <property type="evidence" value="ECO:0007669"/>
    <property type="project" value="UniProtKB-KW"/>
</dbReference>
<dbReference type="GO" id="GO:0006435">
    <property type="term" value="P:threonyl-tRNA aminoacylation"/>
    <property type="evidence" value="ECO:0007669"/>
    <property type="project" value="UniProtKB-UniRule"/>
</dbReference>
<dbReference type="CDD" id="cd01667">
    <property type="entry name" value="TGS_ThrRS"/>
    <property type="match status" value="1"/>
</dbReference>
<dbReference type="CDD" id="cd00860">
    <property type="entry name" value="ThrRS_anticodon"/>
    <property type="match status" value="1"/>
</dbReference>
<dbReference type="CDD" id="cd00771">
    <property type="entry name" value="ThrRS_core"/>
    <property type="match status" value="1"/>
</dbReference>
<dbReference type="FunFam" id="3.10.20.30:FF:000005">
    <property type="entry name" value="Threonine--tRNA ligase"/>
    <property type="match status" value="1"/>
</dbReference>
<dbReference type="FunFam" id="3.30.54.20:FF:000002">
    <property type="entry name" value="Threonine--tRNA ligase"/>
    <property type="match status" value="1"/>
</dbReference>
<dbReference type="FunFam" id="3.30.930.10:FF:000002">
    <property type="entry name" value="Threonine--tRNA ligase"/>
    <property type="match status" value="1"/>
</dbReference>
<dbReference type="FunFam" id="3.40.50.800:FF:000001">
    <property type="entry name" value="Threonine--tRNA ligase"/>
    <property type="match status" value="1"/>
</dbReference>
<dbReference type="FunFam" id="3.30.980.10:FF:000005">
    <property type="entry name" value="Threonyl-tRNA synthetase, mitochondrial"/>
    <property type="match status" value="1"/>
</dbReference>
<dbReference type="Gene3D" id="3.10.20.30">
    <property type="match status" value="1"/>
</dbReference>
<dbReference type="Gene3D" id="3.30.54.20">
    <property type="match status" value="1"/>
</dbReference>
<dbReference type="Gene3D" id="3.40.50.800">
    <property type="entry name" value="Anticodon-binding domain"/>
    <property type="match status" value="1"/>
</dbReference>
<dbReference type="Gene3D" id="3.30.930.10">
    <property type="entry name" value="Bira Bifunctional Protein, Domain 2"/>
    <property type="match status" value="1"/>
</dbReference>
<dbReference type="Gene3D" id="3.30.980.10">
    <property type="entry name" value="Threonyl-trna Synthetase, Chain A, domain 2"/>
    <property type="match status" value="1"/>
</dbReference>
<dbReference type="HAMAP" id="MF_00184">
    <property type="entry name" value="Thr_tRNA_synth"/>
    <property type="match status" value="1"/>
</dbReference>
<dbReference type="InterPro" id="IPR002314">
    <property type="entry name" value="aa-tRNA-synt_IIb"/>
</dbReference>
<dbReference type="InterPro" id="IPR006195">
    <property type="entry name" value="aa-tRNA-synth_II"/>
</dbReference>
<dbReference type="InterPro" id="IPR045864">
    <property type="entry name" value="aa-tRNA-synth_II/BPL/LPL"/>
</dbReference>
<dbReference type="InterPro" id="IPR004154">
    <property type="entry name" value="Anticodon-bd"/>
</dbReference>
<dbReference type="InterPro" id="IPR036621">
    <property type="entry name" value="Anticodon-bd_dom_sf"/>
</dbReference>
<dbReference type="InterPro" id="IPR012675">
    <property type="entry name" value="Beta-grasp_dom_sf"/>
</dbReference>
<dbReference type="InterPro" id="IPR004095">
    <property type="entry name" value="TGS"/>
</dbReference>
<dbReference type="InterPro" id="IPR012676">
    <property type="entry name" value="TGS-like"/>
</dbReference>
<dbReference type="InterPro" id="IPR002320">
    <property type="entry name" value="Thr-tRNA-ligase_IIa"/>
</dbReference>
<dbReference type="InterPro" id="IPR018163">
    <property type="entry name" value="Thr/Ala-tRNA-synth_IIc_edit"/>
</dbReference>
<dbReference type="InterPro" id="IPR047246">
    <property type="entry name" value="ThrRS_anticodon"/>
</dbReference>
<dbReference type="InterPro" id="IPR033728">
    <property type="entry name" value="ThrRS_core"/>
</dbReference>
<dbReference type="InterPro" id="IPR012947">
    <property type="entry name" value="tRNA_SAD"/>
</dbReference>
<dbReference type="NCBIfam" id="TIGR00418">
    <property type="entry name" value="thrS"/>
    <property type="match status" value="1"/>
</dbReference>
<dbReference type="PANTHER" id="PTHR11451:SF44">
    <property type="entry name" value="THREONINE--TRNA LIGASE, CHLOROPLASTIC_MITOCHONDRIAL 2"/>
    <property type="match status" value="1"/>
</dbReference>
<dbReference type="PANTHER" id="PTHR11451">
    <property type="entry name" value="THREONINE-TRNA LIGASE"/>
    <property type="match status" value="1"/>
</dbReference>
<dbReference type="Pfam" id="PF03129">
    <property type="entry name" value="HGTP_anticodon"/>
    <property type="match status" value="1"/>
</dbReference>
<dbReference type="Pfam" id="PF02824">
    <property type="entry name" value="TGS"/>
    <property type="match status" value="1"/>
</dbReference>
<dbReference type="Pfam" id="PF00587">
    <property type="entry name" value="tRNA-synt_2b"/>
    <property type="match status" value="1"/>
</dbReference>
<dbReference type="Pfam" id="PF07973">
    <property type="entry name" value="tRNA_SAD"/>
    <property type="match status" value="1"/>
</dbReference>
<dbReference type="PRINTS" id="PR01047">
    <property type="entry name" value="TRNASYNTHTHR"/>
</dbReference>
<dbReference type="SMART" id="SM00863">
    <property type="entry name" value="tRNA_SAD"/>
    <property type="match status" value="1"/>
</dbReference>
<dbReference type="SUPFAM" id="SSF52954">
    <property type="entry name" value="Class II aaRS ABD-related"/>
    <property type="match status" value="1"/>
</dbReference>
<dbReference type="SUPFAM" id="SSF55681">
    <property type="entry name" value="Class II aaRS and biotin synthetases"/>
    <property type="match status" value="1"/>
</dbReference>
<dbReference type="SUPFAM" id="SSF81271">
    <property type="entry name" value="TGS-like"/>
    <property type="match status" value="1"/>
</dbReference>
<dbReference type="SUPFAM" id="SSF55186">
    <property type="entry name" value="ThrRS/AlaRS common domain"/>
    <property type="match status" value="1"/>
</dbReference>
<dbReference type="PROSITE" id="PS50862">
    <property type="entry name" value="AA_TRNA_LIGASE_II"/>
    <property type="match status" value="1"/>
</dbReference>
<dbReference type="PROSITE" id="PS51880">
    <property type="entry name" value="TGS"/>
    <property type="match status" value="1"/>
</dbReference>
<sequence>MPVITLPDGSQRHYDHAVSVLDVALDIGPGLAKACIAGRVNGELVDASDLIESDAQLAIITAKDAEGLEILRHSCAHLLGHAIKQLWPDTKMAIGPVIDNGFYYDVDIEHTLTQEDLALLEKRMHELADKDYDVIKKKVSWQEARDTFAARGEDYKVAILDENISRDDRPGLYHHEEYVDMCRGPHVPNMRFCHHFKLQKTSGAYWRGDSKNKMLQRIYGTAWGDKKQLNAYLQRLEEAAKRDHRKIGKQLDLYHMQEEAPGMVFWHNDGWTIFRELETFVRMKLKEYQYQEVKGPFMMDRVLWEKTGHWENYAEHMFTTSSENREYCIKPMNCPGHVQIFNQGLKSYRDLPLRMAEFGSCHRNEPSGALHGLMRVRGFTQDDAHVFCTEEQVRDEVNSCIKMVYDMYSTFGFEKIVVKLSTRPEKRIGSDELWTRAEDDLAAALTENGIPFDYQPGEGAFYGPKIEFTLHDCLDRAWQCGTVQLDFSLPGRLSASYIGENNDRQVPVMIHRAILGSMERFIGILTEEYAGFFPTWLAPVQVVVMNITDSQSDYVQQVTKKLQDAGIRAKADLRNEKIGFKIREHTLRRVPYMLVCGDKEVESGKIAVRTRRGKDLGSLDVNVVVDQLLAEIRSRSLHQLEE</sequence>
<accession>A9R0A8</accession>
<keyword id="KW-0030">Aminoacyl-tRNA synthetase</keyword>
<keyword id="KW-0067">ATP-binding</keyword>
<keyword id="KW-0963">Cytoplasm</keyword>
<keyword id="KW-0436">Ligase</keyword>
<keyword id="KW-0479">Metal-binding</keyword>
<keyword id="KW-0547">Nucleotide-binding</keyword>
<keyword id="KW-0648">Protein biosynthesis</keyword>
<keyword id="KW-0694">RNA-binding</keyword>
<keyword id="KW-0820">tRNA-binding</keyword>
<keyword id="KW-0862">Zinc</keyword>
<protein>
    <recommendedName>
        <fullName evidence="1">Threonine--tRNA ligase</fullName>
        <ecNumber evidence="1">6.1.1.3</ecNumber>
    </recommendedName>
    <alternativeName>
        <fullName evidence="1">Threonyl-tRNA synthetase</fullName>
        <shortName evidence="1">ThrRS</shortName>
    </alternativeName>
</protein>
<proteinExistence type="inferred from homology"/>
<feature type="chain" id="PRO_1000098632" description="Threonine--tRNA ligase">
    <location>
        <begin position="1"/>
        <end position="642"/>
    </location>
</feature>
<feature type="domain" description="TGS" evidence="2">
    <location>
        <begin position="1"/>
        <end position="61"/>
    </location>
</feature>
<feature type="region of interest" description="Catalytic" evidence="1">
    <location>
        <begin position="243"/>
        <end position="534"/>
    </location>
</feature>
<feature type="binding site" evidence="1">
    <location>
        <position position="334"/>
    </location>
    <ligand>
        <name>Zn(2+)</name>
        <dbReference type="ChEBI" id="CHEBI:29105"/>
    </ligand>
</feature>
<feature type="binding site" evidence="1">
    <location>
        <position position="385"/>
    </location>
    <ligand>
        <name>Zn(2+)</name>
        <dbReference type="ChEBI" id="CHEBI:29105"/>
    </ligand>
</feature>
<feature type="binding site" evidence="1">
    <location>
        <position position="511"/>
    </location>
    <ligand>
        <name>Zn(2+)</name>
        <dbReference type="ChEBI" id="CHEBI:29105"/>
    </ligand>
</feature>
<evidence type="ECO:0000255" key="1">
    <source>
        <dbReference type="HAMAP-Rule" id="MF_00184"/>
    </source>
</evidence>
<evidence type="ECO:0000255" key="2">
    <source>
        <dbReference type="PROSITE-ProRule" id="PRU01228"/>
    </source>
</evidence>
<reference key="1">
    <citation type="journal article" date="2010" name="J. Bacteriol.">
        <title>Genome sequence of the deep-rooted Yersinia pestis strain Angola reveals new insights into the evolution and pangenome of the plague bacterium.</title>
        <authorList>
            <person name="Eppinger M."/>
            <person name="Worsham P.L."/>
            <person name="Nikolich M.P."/>
            <person name="Riley D.R."/>
            <person name="Sebastian Y."/>
            <person name="Mou S."/>
            <person name="Achtman M."/>
            <person name="Lindler L.E."/>
            <person name="Ravel J."/>
        </authorList>
    </citation>
    <scope>NUCLEOTIDE SEQUENCE [LARGE SCALE GENOMIC DNA]</scope>
    <source>
        <strain>Angola</strain>
    </source>
</reference>
<organism>
    <name type="scientific">Yersinia pestis bv. Antiqua (strain Angola)</name>
    <dbReference type="NCBI Taxonomy" id="349746"/>
    <lineage>
        <taxon>Bacteria</taxon>
        <taxon>Pseudomonadati</taxon>
        <taxon>Pseudomonadota</taxon>
        <taxon>Gammaproteobacteria</taxon>
        <taxon>Enterobacterales</taxon>
        <taxon>Yersiniaceae</taxon>
        <taxon>Yersinia</taxon>
    </lineage>
</organism>
<gene>
    <name evidence="1" type="primary">thrS</name>
    <name type="ordered locus">YpAngola_A2625</name>
</gene>
<name>SYT_YERPG</name>
<comment type="function">
    <text evidence="1">Catalyzes the attachment of threonine to tRNA(Thr) in a two-step reaction: L-threonine is first activated by ATP to form Thr-AMP and then transferred to the acceptor end of tRNA(Thr). Also edits incorrectly charged L-seryl-tRNA(Thr).</text>
</comment>
<comment type="catalytic activity">
    <reaction evidence="1">
        <text>tRNA(Thr) + L-threonine + ATP = L-threonyl-tRNA(Thr) + AMP + diphosphate + H(+)</text>
        <dbReference type="Rhea" id="RHEA:24624"/>
        <dbReference type="Rhea" id="RHEA-COMP:9670"/>
        <dbReference type="Rhea" id="RHEA-COMP:9704"/>
        <dbReference type="ChEBI" id="CHEBI:15378"/>
        <dbReference type="ChEBI" id="CHEBI:30616"/>
        <dbReference type="ChEBI" id="CHEBI:33019"/>
        <dbReference type="ChEBI" id="CHEBI:57926"/>
        <dbReference type="ChEBI" id="CHEBI:78442"/>
        <dbReference type="ChEBI" id="CHEBI:78534"/>
        <dbReference type="ChEBI" id="CHEBI:456215"/>
        <dbReference type="EC" id="6.1.1.3"/>
    </reaction>
</comment>
<comment type="cofactor">
    <cofactor evidence="1">
        <name>Zn(2+)</name>
        <dbReference type="ChEBI" id="CHEBI:29105"/>
    </cofactor>
    <text evidence="1">Binds 1 zinc ion per subunit.</text>
</comment>
<comment type="subunit">
    <text evidence="1">Homodimer.</text>
</comment>
<comment type="subcellular location">
    <subcellularLocation>
        <location evidence="1">Cytoplasm</location>
    </subcellularLocation>
</comment>
<comment type="similarity">
    <text evidence="1">Belongs to the class-II aminoacyl-tRNA synthetase family.</text>
</comment>